<reference key="1">
    <citation type="journal article" date="1996" name="Microbiology">
        <title>Determination of a 12 kb nucleotide sequence around the 76 degrees region of the Bacillus subtilis chromosome.</title>
        <authorList>
            <person name="Yamamoto H."/>
            <person name="Uchiyama S."/>
            <person name="Fajar A.N."/>
            <person name="Ogasawara N."/>
            <person name="Sekiguchi J."/>
        </authorList>
    </citation>
    <scope>NUCLEOTIDE SEQUENCE [GENOMIC DNA]</scope>
    <source>
        <strain>168</strain>
    </source>
</reference>
<reference key="2">
    <citation type="journal article" date="1997" name="Nature">
        <title>The complete genome sequence of the Gram-positive bacterium Bacillus subtilis.</title>
        <authorList>
            <person name="Kunst F."/>
            <person name="Ogasawara N."/>
            <person name="Moszer I."/>
            <person name="Albertini A.M."/>
            <person name="Alloni G."/>
            <person name="Azevedo V."/>
            <person name="Bertero M.G."/>
            <person name="Bessieres P."/>
            <person name="Bolotin A."/>
            <person name="Borchert S."/>
            <person name="Borriss R."/>
            <person name="Boursier L."/>
            <person name="Brans A."/>
            <person name="Braun M."/>
            <person name="Brignell S.C."/>
            <person name="Bron S."/>
            <person name="Brouillet S."/>
            <person name="Bruschi C.V."/>
            <person name="Caldwell B."/>
            <person name="Capuano V."/>
            <person name="Carter N.M."/>
            <person name="Choi S.-K."/>
            <person name="Codani J.-J."/>
            <person name="Connerton I.F."/>
            <person name="Cummings N.J."/>
            <person name="Daniel R.A."/>
            <person name="Denizot F."/>
            <person name="Devine K.M."/>
            <person name="Duesterhoeft A."/>
            <person name="Ehrlich S.D."/>
            <person name="Emmerson P.T."/>
            <person name="Entian K.-D."/>
            <person name="Errington J."/>
            <person name="Fabret C."/>
            <person name="Ferrari E."/>
            <person name="Foulger D."/>
            <person name="Fritz C."/>
            <person name="Fujita M."/>
            <person name="Fujita Y."/>
            <person name="Fuma S."/>
            <person name="Galizzi A."/>
            <person name="Galleron N."/>
            <person name="Ghim S.-Y."/>
            <person name="Glaser P."/>
            <person name="Goffeau A."/>
            <person name="Golightly E.J."/>
            <person name="Grandi G."/>
            <person name="Guiseppi G."/>
            <person name="Guy B.J."/>
            <person name="Haga K."/>
            <person name="Haiech J."/>
            <person name="Harwood C.R."/>
            <person name="Henaut A."/>
            <person name="Hilbert H."/>
            <person name="Holsappel S."/>
            <person name="Hosono S."/>
            <person name="Hullo M.-F."/>
            <person name="Itaya M."/>
            <person name="Jones L.-M."/>
            <person name="Joris B."/>
            <person name="Karamata D."/>
            <person name="Kasahara Y."/>
            <person name="Klaerr-Blanchard M."/>
            <person name="Klein C."/>
            <person name="Kobayashi Y."/>
            <person name="Koetter P."/>
            <person name="Koningstein G."/>
            <person name="Krogh S."/>
            <person name="Kumano M."/>
            <person name="Kurita K."/>
            <person name="Lapidus A."/>
            <person name="Lardinois S."/>
            <person name="Lauber J."/>
            <person name="Lazarevic V."/>
            <person name="Lee S.-M."/>
            <person name="Levine A."/>
            <person name="Liu H."/>
            <person name="Masuda S."/>
            <person name="Mauel C."/>
            <person name="Medigue C."/>
            <person name="Medina N."/>
            <person name="Mellado R.P."/>
            <person name="Mizuno M."/>
            <person name="Moestl D."/>
            <person name="Nakai S."/>
            <person name="Noback M."/>
            <person name="Noone D."/>
            <person name="O'Reilly M."/>
            <person name="Ogawa K."/>
            <person name="Ogiwara A."/>
            <person name="Oudega B."/>
            <person name="Park S.-H."/>
            <person name="Parro V."/>
            <person name="Pohl T.M."/>
            <person name="Portetelle D."/>
            <person name="Porwollik S."/>
            <person name="Prescott A.M."/>
            <person name="Presecan E."/>
            <person name="Pujic P."/>
            <person name="Purnelle B."/>
            <person name="Rapoport G."/>
            <person name="Rey M."/>
            <person name="Reynolds S."/>
            <person name="Rieger M."/>
            <person name="Rivolta C."/>
            <person name="Rocha E."/>
            <person name="Roche B."/>
            <person name="Rose M."/>
            <person name="Sadaie Y."/>
            <person name="Sato T."/>
            <person name="Scanlan E."/>
            <person name="Schleich S."/>
            <person name="Schroeter R."/>
            <person name="Scoffone F."/>
            <person name="Sekiguchi J."/>
            <person name="Sekowska A."/>
            <person name="Seror S.J."/>
            <person name="Serror P."/>
            <person name="Shin B.-S."/>
            <person name="Soldo B."/>
            <person name="Sorokin A."/>
            <person name="Tacconi E."/>
            <person name="Takagi T."/>
            <person name="Takahashi H."/>
            <person name="Takemaru K."/>
            <person name="Takeuchi M."/>
            <person name="Tamakoshi A."/>
            <person name="Tanaka T."/>
            <person name="Terpstra P."/>
            <person name="Tognoni A."/>
            <person name="Tosato V."/>
            <person name="Uchiyama S."/>
            <person name="Vandenbol M."/>
            <person name="Vannier F."/>
            <person name="Vassarotti A."/>
            <person name="Viari A."/>
            <person name="Wambutt R."/>
            <person name="Wedler E."/>
            <person name="Wedler H."/>
            <person name="Weitzenegger T."/>
            <person name="Winters P."/>
            <person name="Wipat A."/>
            <person name="Yamamoto H."/>
            <person name="Yamane K."/>
            <person name="Yasumoto K."/>
            <person name="Yata K."/>
            <person name="Yoshida K."/>
            <person name="Yoshikawa H.-F."/>
            <person name="Zumstein E."/>
            <person name="Yoshikawa H."/>
            <person name="Danchin A."/>
        </authorList>
    </citation>
    <scope>NUCLEOTIDE SEQUENCE [LARGE SCALE GENOMIC DNA]</scope>
    <source>
        <strain>168</strain>
    </source>
</reference>
<name>YFIF_BACSU</name>
<organism>
    <name type="scientific">Bacillus subtilis (strain 168)</name>
    <dbReference type="NCBI Taxonomy" id="224308"/>
    <lineage>
        <taxon>Bacteria</taxon>
        <taxon>Bacillati</taxon>
        <taxon>Bacillota</taxon>
        <taxon>Bacilli</taxon>
        <taxon>Bacillales</taxon>
        <taxon>Bacillaceae</taxon>
        <taxon>Bacillus</taxon>
    </lineage>
</organism>
<keyword id="KW-0238">DNA-binding</keyword>
<keyword id="KW-1185">Reference proteome</keyword>
<keyword id="KW-0804">Transcription</keyword>
<keyword id="KW-0805">Transcription regulation</keyword>
<proteinExistence type="predicted"/>
<evidence type="ECO:0000255" key="1">
    <source>
        <dbReference type="PROSITE-ProRule" id="PRU00593"/>
    </source>
</evidence>
<dbReference type="EMBL" id="D50543">
    <property type="protein sequence ID" value="BAA09110.1"/>
    <property type="molecule type" value="Genomic_DNA"/>
</dbReference>
<dbReference type="EMBL" id="AL009126">
    <property type="protein sequence ID" value="CAB12654.1"/>
    <property type="molecule type" value="Genomic_DNA"/>
</dbReference>
<dbReference type="PIR" id="A69803">
    <property type="entry name" value="A69803"/>
</dbReference>
<dbReference type="RefSeq" id="NP_388706.1">
    <property type="nucleotide sequence ID" value="NC_000964.3"/>
</dbReference>
<dbReference type="RefSeq" id="WP_003243004.1">
    <property type="nucleotide sequence ID" value="NZ_OZ025638.1"/>
</dbReference>
<dbReference type="SMR" id="P54722"/>
<dbReference type="FunCoup" id="P54722">
    <property type="interactions" value="124"/>
</dbReference>
<dbReference type="STRING" id="224308.BSU08250"/>
<dbReference type="PaxDb" id="224308-BSU08250"/>
<dbReference type="EnsemblBacteria" id="CAB12654">
    <property type="protein sequence ID" value="CAB12654"/>
    <property type="gene ID" value="BSU_08250"/>
</dbReference>
<dbReference type="GeneID" id="939704"/>
<dbReference type="KEGG" id="bsu:BSU08250"/>
<dbReference type="PATRIC" id="fig|224308.179.peg.891"/>
<dbReference type="eggNOG" id="COG1917">
    <property type="taxonomic scope" value="Bacteria"/>
</dbReference>
<dbReference type="eggNOG" id="COG4977">
    <property type="taxonomic scope" value="Bacteria"/>
</dbReference>
<dbReference type="InParanoid" id="P54722"/>
<dbReference type="OrthoDB" id="149040at2"/>
<dbReference type="PhylomeDB" id="P54722"/>
<dbReference type="BioCyc" id="BSUB:BSU08250-MONOMER"/>
<dbReference type="Proteomes" id="UP000001570">
    <property type="component" value="Chromosome"/>
</dbReference>
<dbReference type="GO" id="GO:0003700">
    <property type="term" value="F:DNA-binding transcription factor activity"/>
    <property type="evidence" value="ECO:0007669"/>
    <property type="project" value="InterPro"/>
</dbReference>
<dbReference type="GO" id="GO:0043565">
    <property type="term" value="F:sequence-specific DNA binding"/>
    <property type="evidence" value="ECO:0007669"/>
    <property type="project" value="InterPro"/>
</dbReference>
<dbReference type="CDD" id="cd02208">
    <property type="entry name" value="cupin_RmlC-like"/>
    <property type="match status" value="1"/>
</dbReference>
<dbReference type="Gene3D" id="1.10.10.60">
    <property type="entry name" value="Homeodomain-like"/>
    <property type="match status" value="2"/>
</dbReference>
<dbReference type="Gene3D" id="2.60.120.10">
    <property type="entry name" value="Jelly Rolls"/>
    <property type="match status" value="1"/>
</dbReference>
<dbReference type="InterPro" id="IPR003313">
    <property type="entry name" value="AraC-bd"/>
</dbReference>
<dbReference type="InterPro" id="IPR009057">
    <property type="entry name" value="Homeodomain-like_sf"/>
</dbReference>
<dbReference type="InterPro" id="IPR037923">
    <property type="entry name" value="HTH-like"/>
</dbReference>
<dbReference type="InterPro" id="IPR018060">
    <property type="entry name" value="HTH_AraC"/>
</dbReference>
<dbReference type="InterPro" id="IPR018062">
    <property type="entry name" value="HTH_AraC-typ_CS"/>
</dbReference>
<dbReference type="InterPro" id="IPR014710">
    <property type="entry name" value="RmlC-like_jellyroll"/>
</dbReference>
<dbReference type="PANTHER" id="PTHR43280">
    <property type="entry name" value="ARAC-FAMILY TRANSCRIPTIONAL REGULATOR"/>
    <property type="match status" value="1"/>
</dbReference>
<dbReference type="PANTHER" id="PTHR43280:SF28">
    <property type="entry name" value="HTH-TYPE TRANSCRIPTIONAL ACTIVATOR RHAS"/>
    <property type="match status" value="1"/>
</dbReference>
<dbReference type="Pfam" id="PF02311">
    <property type="entry name" value="AraC_binding"/>
    <property type="match status" value="1"/>
</dbReference>
<dbReference type="Pfam" id="PF12833">
    <property type="entry name" value="HTH_18"/>
    <property type="match status" value="1"/>
</dbReference>
<dbReference type="SMART" id="SM00342">
    <property type="entry name" value="HTH_ARAC"/>
    <property type="match status" value="1"/>
</dbReference>
<dbReference type="SUPFAM" id="SSF46689">
    <property type="entry name" value="Homeodomain-like"/>
    <property type="match status" value="2"/>
</dbReference>
<dbReference type="SUPFAM" id="SSF51215">
    <property type="entry name" value="Regulatory protein AraC"/>
    <property type="match status" value="1"/>
</dbReference>
<dbReference type="PROSITE" id="PS00041">
    <property type="entry name" value="HTH_ARAC_FAMILY_1"/>
    <property type="match status" value="1"/>
</dbReference>
<dbReference type="PROSITE" id="PS01124">
    <property type="entry name" value="HTH_ARAC_FAMILY_2"/>
    <property type="match status" value="1"/>
</dbReference>
<feature type="chain" id="PRO_0000194620" description="Uncharacterized HTH-type transcriptional regulator YfiF">
    <location>
        <begin position="1"/>
        <end position="314"/>
    </location>
</feature>
<feature type="domain" description="HTH araC/xylS-type" evidence="1">
    <location>
        <begin position="192"/>
        <end position="289"/>
    </location>
</feature>
<feature type="DNA-binding region" description="H-T-H motif" evidence="1">
    <location>
        <begin position="209"/>
        <end position="230"/>
    </location>
</feature>
<feature type="DNA-binding region" description="H-T-H motif" evidence="1">
    <location>
        <begin position="257"/>
        <end position="279"/>
    </location>
</feature>
<gene>
    <name type="primary">yfiF</name>
    <name type="ordered locus">BSU08250</name>
</gene>
<protein>
    <recommendedName>
        <fullName>Uncharacterized HTH-type transcriptional regulator YfiF</fullName>
    </recommendedName>
</protein>
<sequence>MELNHLVTGKIALNQYVHRLEQKDVSFYVHYWGAMTNHYNTLLHKHSFYEICYVVRGEGYYLEGDRTYPLREQTIFLSKPEHLHQIKSETGLFLFYVAFELSEDQSSAEWIKVMEEVKQSPFITMQLKDGEPPGLLWKTLMLQAAQPVNAFDKEILSHLSHALILSLIQTFLPYAQRPKQKQPIHTSSALLTEVKLHIKDNLSQPLKLTDVASHFHISGRHLSRLFAAELGVSYSEFVQNEKINKAAELLKSTNLSIKEIAEEIGFSVHYFTRVFSAKIGSSPGLFRSLYKDSKMTAFQINKPFQKIEQAKPHE</sequence>
<accession>P54722</accession>